<organism>
    <name type="scientific">Semnopithecus entellus</name>
    <name type="common">Northern plains gray langur</name>
    <name type="synonym">Presbytis entellus</name>
    <dbReference type="NCBI Taxonomy" id="88029"/>
    <lineage>
        <taxon>Eukaryota</taxon>
        <taxon>Metazoa</taxon>
        <taxon>Chordata</taxon>
        <taxon>Craniata</taxon>
        <taxon>Vertebrata</taxon>
        <taxon>Euteleostomi</taxon>
        <taxon>Mammalia</taxon>
        <taxon>Eutheria</taxon>
        <taxon>Euarchontoglires</taxon>
        <taxon>Primates</taxon>
        <taxon>Haplorrhini</taxon>
        <taxon>Catarrhini</taxon>
        <taxon>Cercopithecidae</taxon>
        <taxon>Colobinae</taxon>
        <taxon>Semnopithecus</taxon>
    </lineage>
</organism>
<dbReference type="EC" id="7.1.1.2"/>
<dbReference type="EMBL" id="DQ355297">
    <property type="protein sequence ID" value="ABD39248.1"/>
    <property type="molecule type" value="Genomic_DNA"/>
</dbReference>
<dbReference type="RefSeq" id="YP_659442.1">
    <property type="nucleotide sequence ID" value="NC_008215.1"/>
</dbReference>
<dbReference type="SMR" id="Q15GS3"/>
<dbReference type="GeneID" id="4171572"/>
<dbReference type="CTD" id="4539"/>
<dbReference type="GO" id="GO:0005743">
    <property type="term" value="C:mitochondrial inner membrane"/>
    <property type="evidence" value="ECO:0000250"/>
    <property type="project" value="UniProtKB"/>
</dbReference>
<dbReference type="GO" id="GO:0045271">
    <property type="term" value="C:respiratory chain complex I"/>
    <property type="evidence" value="ECO:0000250"/>
    <property type="project" value="UniProtKB"/>
</dbReference>
<dbReference type="GO" id="GO:0008137">
    <property type="term" value="F:NADH dehydrogenase (ubiquinone) activity"/>
    <property type="evidence" value="ECO:0000250"/>
    <property type="project" value="UniProtKB"/>
</dbReference>
<dbReference type="GO" id="GO:0042773">
    <property type="term" value="P:ATP synthesis coupled electron transport"/>
    <property type="evidence" value="ECO:0007669"/>
    <property type="project" value="InterPro"/>
</dbReference>
<dbReference type="FunFam" id="1.10.287.3510:FF:000002">
    <property type="entry name" value="NADH-ubiquinone oxidoreductase chain 4L"/>
    <property type="match status" value="1"/>
</dbReference>
<dbReference type="Gene3D" id="1.10.287.3510">
    <property type="match status" value="1"/>
</dbReference>
<dbReference type="InterPro" id="IPR001133">
    <property type="entry name" value="NADH_UbQ_OxRdtase_chain4L/K"/>
</dbReference>
<dbReference type="InterPro" id="IPR039428">
    <property type="entry name" value="NUOK/Mnh_C1-like"/>
</dbReference>
<dbReference type="PANTHER" id="PTHR11434:SF0">
    <property type="entry name" value="NADH-UBIQUINONE OXIDOREDUCTASE CHAIN 4L"/>
    <property type="match status" value="1"/>
</dbReference>
<dbReference type="PANTHER" id="PTHR11434">
    <property type="entry name" value="NADH-UBIQUINONE OXIDOREDUCTASE SUBUNIT ND4L"/>
    <property type="match status" value="1"/>
</dbReference>
<dbReference type="Pfam" id="PF00420">
    <property type="entry name" value="Oxidored_q2"/>
    <property type="match status" value="1"/>
</dbReference>
<name>NU4LM_SEMEN</name>
<reference key="1">
    <citation type="journal article" date="2006" name="Mol. Phylogenet. Evol.">
        <title>Mitochondrial data support an odd-nosed colobine clade.</title>
        <authorList>
            <person name="Sterner K.N."/>
            <person name="Raaum R.L."/>
            <person name="Zhang Y.-P."/>
            <person name="Stewart C.-B.R."/>
            <person name="Disotell T.R."/>
        </authorList>
    </citation>
    <scope>NUCLEOTIDE SEQUENCE [GENOMIC DNA]</scope>
</reference>
<proteinExistence type="inferred from homology"/>
<comment type="function">
    <text evidence="1">Core subunit of the mitochondrial membrane respiratory chain NADH dehydrogenase (Complex I) which catalyzes electron transfer from NADH through the respiratory chain, using ubiquinone as an electron acceptor. Part of the enzyme membrane arm which is embedded in the lipid bilayer and involved in proton translocation.</text>
</comment>
<comment type="catalytic activity">
    <reaction evidence="1">
        <text>a ubiquinone + NADH + 5 H(+)(in) = a ubiquinol + NAD(+) + 4 H(+)(out)</text>
        <dbReference type="Rhea" id="RHEA:29091"/>
        <dbReference type="Rhea" id="RHEA-COMP:9565"/>
        <dbReference type="Rhea" id="RHEA-COMP:9566"/>
        <dbReference type="ChEBI" id="CHEBI:15378"/>
        <dbReference type="ChEBI" id="CHEBI:16389"/>
        <dbReference type="ChEBI" id="CHEBI:17976"/>
        <dbReference type="ChEBI" id="CHEBI:57540"/>
        <dbReference type="ChEBI" id="CHEBI:57945"/>
        <dbReference type="EC" id="7.1.1.2"/>
    </reaction>
    <physiologicalReaction direction="left-to-right" evidence="1">
        <dbReference type="Rhea" id="RHEA:29092"/>
    </physiologicalReaction>
</comment>
<comment type="subunit">
    <text evidence="2">Core subunit of respiratory chain NADH dehydrogenase (Complex I) which is composed of 45 different subunits.</text>
</comment>
<comment type="subcellular location">
    <subcellularLocation>
        <location evidence="2">Mitochondrion inner membrane</location>
        <topology evidence="3">Multi-pass membrane protein</topology>
    </subcellularLocation>
</comment>
<comment type="similarity">
    <text evidence="4">Belongs to the complex I subunit 4L family.</text>
</comment>
<evidence type="ECO:0000250" key="1">
    <source>
        <dbReference type="UniProtKB" id="P03901"/>
    </source>
</evidence>
<evidence type="ECO:0000250" key="2">
    <source>
        <dbReference type="UniProtKB" id="P03902"/>
    </source>
</evidence>
<evidence type="ECO:0000255" key="3"/>
<evidence type="ECO:0000305" key="4"/>
<feature type="chain" id="PRO_0000275121" description="NADH-ubiquinone oxidoreductase chain 4L">
    <location>
        <begin position="1"/>
        <end position="98"/>
    </location>
</feature>
<feature type="transmembrane region" description="Helical" evidence="3">
    <location>
        <begin position="1"/>
        <end position="21"/>
    </location>
</feature>
<feature type="transmembrane region" description="Helical" evidence="3">
    <location>
        <begin position="29"/>
        <end position="49"/>
    </location>
</feature>
<feature type="transmembrane region" description="Helical" evidence="3">
    <location>
        <begin position="58"/>
        <end position="78"/>
    </location>
</feature>
<gene>
    <name type="primary">MT-ND4L</name>
    <name type="synonym">MTND4L</name>
    <name type="synonym">NADH4L</name>
    <name type="synonym">ND4L</name>
</gene>
<geneLocation type="mitochondrion"/>
<keyword id="KW-0249">Electron transport</keyword>
<keyword id="KW-0472">Membrane</keyword>
<keyword id="KW-0496">Mitochondrion</keyword>
<keyword id="KW-0999">Mitochondrion inner membrane</keyword>
<keyword id="KW-0520">NAD</keyword>
<keyword id="KW-0679">Respiratory chain</keyword>
<keyword id="KW-1278">Translocase</keyword>
<keyword id="KW-0812">Transmembrane</keyword>
<keyword id="KW-1133">Transmembrane helix</keyword>
<keyword id="KW-0813">Transport</keyword>
<keyword id="KW-0830">Ubiquinone</keyword>
<sequence>MPIIYMNIMLSFIISLLGMLIYRSHLMSSLLCLEGMMLSLFIMSTLMALNMHFPLANIVPVALLVFAACEAAVGLALLVSISNTYGLDYVHNLSLLQC</sequence>
<protein>
    <recommendedName>
        <fullName>NADH-ubiquinone oxidoreductase chain 4L</fullName>
        <ecNumber>7.1.1.2</ecNumber>
    </recommendedName>
    <alternativeName>
        <fullName>NADH dehydrogenase subunit 4L</fullName>
    </alternativeName>
</protein>
<accession>Q15GS3</accession>